<comment type="function">
    <text evidence="1">One of the primary rRNA binding proteins. Required for association of the 30S and 50S subunits to form the 70S ribosome, for tRNA binding and peptide bond formation. It has been suggested to have peptidyltransferase activity; this is somewhat controversial. Makes several contacts with the 16S rRNA in the 70S ribosome.</text>
</comment>
<comment type="subunit">
    <text evidence="1">Part of the 50S ribosomal subunit. Forms a bridge to the 30S subunit in the 70S ribosome.</text>
</comment>
<comment type="similarity">
    <text evidence="1">Belongs to the universal ribosomal protein uL2 family.</text>
</comment>
<organism>
    <name type="scientific">Borrelia garinii subsp. bavariensis (strain ATCC BAA-2496 / DSM 23469 / PBi)</name>
    <name type="common">Borreliella bavariensis</name>
    <dbReference type="NCBI Taxonomy" id="290434"/>
    <lineage>
        <taxon>Bacteria</taxon>
        <taxon>Pseudomonadati</taxon>
        <taxon>Spirochaetota</taxon>
        <taxon>Spirochaetia</taxon>
        <taxon>Spirochaetales</taxon>
        <taxon>Borreliaceae</taxon>
        <taxon>Borreliella</taxon>
    </lineage>
</organism>
<protein>
    <recommendedName>
        <fullName evidence="1">Large ribosomal subunit protein uL2</fullName>
    </recommendedName>
    <alternativeName>
        <fullName evidence="3">50S ribosomal protein L2</fullName>
    </alternativeName>
</protein>
<proteinExistence type="inferred from homology"/>
<reference key="1">
    <citation type="journal article" date="2004" name="Nucleic Acids Res.">
        <title>Comparative analysis of the Borrelia garinii genome.</title>
        <authorList>
            <person name="Gloeckner G."/>
            <person name="Lehmann R."/>
            <person name="Romualdi A."/>
            <person name="Pradella S."/>
            <person name="Schulte-Spechtel U."/>
            <person name="Schilhabel M."/>
            <person name="Wilske B."/>
            <person name="Suehnel J."/>
            <person name="Platzer M."/>
        </authorList>
    </citation>
    <scope>NUCLEOTIDE SEQUENCE [LARGE SCALE GENOMIC DNA]</scope>
    <source>
        <strain>ATCC BAA-2496 / DSM 23469 / PBi</strain>
    </source>
</reference>
<gene>
    <name evidence="1" type="primary">rplB</name>
    <name type="ordered locus">BG0493</name>
</gene>
<accession>Q661D9</accession>
<keyword id="KW-0687">Ribonucleoprotein</keyword>
<keyword id="KW-0689">Ribosomal protein</keyword>
<keyword id="KW-0694">RNA-binding</keyword>
<keyword id="KW-0699">rRNA-binding</keyword>
<evidence type="ECO:0000255" key="1">
    <source>
        <dbReference type="HAMAP-Rule" id="MF_01320"/>
    </source>
</evidence>
<evidence type="ECO:0000256" key="2">
    <source>
        <dbReference type="SAM" id="MobiDB-lite"/>
    </source>
</evidence>
<evidence type="ECO:0000305" key="3"/>
<sequence length="277" mass="30543">MGIKTYKPKTSSLRYKTTLSFDDLSKGNDPLKSLTKGKKLKSGRDSSGRISIRRRGGGHKRKYRLIDFNRRDKFSIPARVASIEYDPNRSANIALLVYKDGEKRYIISPKGIKVGDVLESGPNAPIKIGNALPLENIPIGRTIHNIELNVGKGGQLVRSAGGYAMILASDGNYVTVKLSSGEMRLIFKKCIATIGEIGNEDYANVSIGKAGKSRWLGRRPKVRGVAMNPVDHPHGGGEGKTSGGRHPVSPWGQPTKGYKTRKKKRYSDKFIIKRRNK</sequence>
<name>RL2_BORGP</name>
<feature type="chain" id="PRO_0000237161" description="Large ribosomal subunit protein uL2">
    <location>
        <begin position="1"/>
        <end position="277"/>
    </location>
</feature>
<feature type="region of interest" description="Disordered" evidence="2">
    <location>
        <begin position="32"/>
        <end position="58"/>
    </location>
</feature>
<feature type="region of interest" description="Disordered" evidence="2">
    <location>
        <begin position="225"/>
        <end position="277"/>
    </location>
</feature>
<feature type="compositionally biased region" description="Basic residues" evidence="2">
    <location>
        <begin position="258"/>
        <end position="277"/>
    </location>
</feature>
<dbReference type="EMBL" id="CP000013">
    <property type="protein sequence ID" value="AAU07332.1"/>
    <property type="molecule type" value="Genomic_DNA"/>
</dbReference>
<dbReference type="RefSeq" id="WP_011193801.1">
    <property type="nucleotide sequence ID" value="NZ_CP028872.1"/>
</dbReference>
<dbReference type="SMR" id="Q661D9"/>
<dbReference type="GeneID" id="45161276"/>
<dbReference type="KEGG" id="bga:BG0493"/>
<dbReference type="eggNOG" id="COG0090">
    <property type="taxonomic scope" value="Bacteria"/>
</dbReference>
<dbReference type="HOGENOM" id="CLU_036235_2_1_12"/>
<dbReference type="OrthoDB" id="9778722at2"/>
<dbReference type="Proteomes" id="UP000002276">
    <property type="component" value="Chromosome"/>
</dbReference>
<dbReference type="GO" id="GO:0015934">
    <property type="term" value="C:large ribosomal subunit"/>
    <property type="evidence" value="ECO:0007669"/>
    <property type="project" value="InterPro"/>
</dbReference>
<dbReference type="GO" id="GO:0019843">
    <property type="term" value="F:rRNA binding"/>
    <property type="evidence" value="ECO:0007669"/>
    <property type="project" value="UniProtKB-UniRule"/>
</dbReference>
<dbReference type="GO" id="GO:0003735">
    <property type="term" value="F:structural constituent of ribosome"/>
    <property type="evidence" value="ECO:0007669"/>
    <property type="project" value="InterPro"/>
</dbReference>
<dbReference type="GO" id="GO:0016740">
    <property type="term" value="F:transferase activity"/>
    <property type="evidence" value="ECO:0007669"/>
    <property type="project" value="InterPro"/>
</dbReference>
<dbReference type="GO" id="GO:0002181">
    <property type="term" value="P:cytoplasmic translation"/>
    <property type="evidence" value="ECO:0007669"/>
    <property type="project" value="TreeGrafter"/>
</dbReference>
<dbReference type="FunFam" id="2.30.30.30:FF:000001">
    <property type="entry name" value="50S ribosomal protein L2"/>
    <property type="match status" value="1"/>
</dbReference>
<dbReference type="FunFam" id="2.40.50.140:FF:000003">
    <property type="entry name" value="50S ribosomal protein L2"/>
    <property type="match status" value="1"/>
</dbReference>
<dbReference type="FunFam" id="4.10.950.10:FF:000001">
    <property type="entry name" value="50S ribosomal protein L2"/>
    <property type="match status" value="1"/>
</dbReference>
<dbReference type="Gene3D" id="2.30.30.30">
    <property type="match status" value="1"/>
</dbReference>
<dbReference type="Gene3D" id="2.40.50.140">
    <property type="entry name" value="Nucleic acid-binding proteins"/>
    <property type="match status" value="1"/>
</dbReference>
<dbReference type="Gene3D" id="4.10.950.10">
    <property type="entry name" value="Ribosomal protein L2, domain 3"/>
    <property type="match status" value="1"/>
</dbReference>
<dbReference type="HAMAP" id="MF_01320_B">
    <property type="entry name" value="Ribosomal_uL2_B"/>
    <property type="match status" value="1"/>
</dbReference>
<dbReference type="InterPro" id="IPR012340">
    <property type="entry name" value="NA-bd_OB-fold"/>
</dbReference>
<dbReference type="InterPro" id="IPR014722">
    <property type="entry name" value="Rib_uL2_dom2"/>
</dbReference>
<dbReference type="InterPro" id="IPR002171">
    <property type="entry name" value="Ribosomal_uL2"/>
</dbReference>
<dbReference type="InterPro" id="IPR005880">
    <property type="entry name" value="Ribosomal_uL2_bac/org-type"/>
</dbReference>
<dbReference type="InterPro" id="IPR022669">
    <property type="entry name" value="Ribosomal_uL2_C"/>
</dbReference>
<dbReference type="InterPro" id="IPR022671">
    <property type="entry name" value="Ribosomal_uL2_CS"/>
</dbReference>
<dbReference type="InterPro" id="IPR014726">
    <property type="entry name" value="Ribosomal_uL2_dom3"/>
</dbReference>
<dbReference type="InterPro" id="IPR022666">
    <property type="entry name" value="Ribosomal_uL2_RNA-bd_dom"/>
</dbReference>
<dbReference type="InterPro" id="IPR008991">
    <property type="entry name" value="Translation_prot_SH3-like_sf"/>
</dbReference>
<dbReference type="NCBIfam" id="TIGR01171">
    <property type="entry name" value="rplB_bact"/>
    <property type="match status" value="1"/>
</dbReference>
<dbReference type="PANTHER" id="PTHR13691:SF5">
    <property type="entry name" value="LARGE RIBOSOMAL SUBUNIT PROTEIN UL2M"/>
    <property type="match status" value="1"/>
</dbReference>
<dbReference type="PANTHER" id="PTHR13691">
    <property type="entry name" value="RIBOSOMAL PROTEIN L2"/>
    <property type="match status" value="1"/>
</dbReference>
<dbReference type="Pfam" id="PF00181">
    <property type="entry name" value="Ribosomal_L2"/>
    <property type="match status" value="1"/>
</dbReference>
<dbReference type="Pfam" id="PF03947">
    <property type="entry name" value="Ribosomal_L2_C"/>
    <property type="match status" value="1"/>
</dbReference>
<dbReference type="PIRSF" id="PIRSF002158">
    <property type="entry name" value="Ribosomal_L2"/>
    <property type="match status" value="1"/>
</dbReference>
<dbReference type="SMART" id="SM01383">
    <property type="entry name" value="Ribosomal_L2"/>
    <property type="match status" value="1"/>
</dbReference>
<dbReference type="SMART" id="SM01382">
    <property type="entry name" value="Ribosomal_L2_C"/>
    <property type="match status" value="1"/>
</dbReference>
<dbReference type="SUPFAM" id="SSF50249">
    <property type="entry name" value="Nucleic acid-binding proteins"/>
    <property type="match status" value="1"/>
</dbReference>
<dbReference type="SUPFAM" id="SSF50104">
    <property type="entry name" value="Translation proteins SH3-like domain"/>
    <property type="match status" value="1"/>
</dbReference>
<dbReference type="PROSITE" id="PS00467">
    <property type="entry name" value="RIBOSOMAL_L2"/>
    <property type="match status" value="1"/>
</dbReference>